<comment type="function">
    <text evidence="1">Catalyzes the reversible isomerization of glucose-6-phosphate to fructose-6-phosphate.</text>
</comment>
<comment type="catalytic activity">
    <reaction evidence="1">
        <text>alpha-D-glucose 6-phosphate = beta-D-fructose 6-phosphate</text>
        <dbReference type="Rhea" id="RHEA:11816"/>
        <dbReference type="ChEBI" id="CHEBI:57634"/>
        <dbReference type="ChEBI" id="CHEBI:58225"/>
        <dbReference type="EC" id="5.3.1.9"/>
    </reaction>
</comment>
<comment type="pathway">
    <text evidence="1">Carbohydrate biosynthesis; gluconeogenesis.</text>
</comment>
<comment type="pathway">
    <text evidence="1">Carbohydrate degradation; glycolysis; D-glyceraldehyde 3-phosphate and glycerone phosphate from D-glucose: step 2/4.</text>
</comment>
<comment type="subcellular location">
    <subcellularLocation>
        <location evidence="1">Cytoplasm</location>
    </subcellularLocation>
</comment>
<comment type="similarity">
    <text evidence="1">Belongs to the GPI family.</text>
</comment>
<accession>Q17W92</accession>
<organism>
    <name type="scientific">Helicobacter acinonychis (strain Sheeba)</name>
    <dbReference type="NCBI Taxonomy" id="382638"/>
    <lineage>
        <taxon>Bacteria</taxon>
        <taxon>Pseudomonadati</taxon>
        <taxon>Campylobacterota</taxon>
        <taxon>Epsilonproteobacteria</taxon>
        <taxon>Campylobacterales</taxon>
        <taxon>Helicobacteraceae</taxon>
        <taxon>Helicobacter</taxon>
    </lineage>
</organism>
<dbReference type="EC" id="5.3.1.9" evidence="1"/>
<dbReference type="EMBL" id="AM260522">
    <property type="protein sequence ID" value="CAK00084.1"/>
    <property type="molecule type" value="Genomic_DNA"/>
</dbReference>
<dbReference type="RefSeq" id="WP_011578174.1">
    <property type="nucleotide sequence ID" value="NC_008229.1"/>
</dbReference>
<dbReference type="SMR" id="Q17W92"/>
<dbReference type="STRING" id="382638.Hac_1346"/>
<dbReference type="GeneID" id="31758662"/>
<dbReference type="KEGG" id="hac:Hac_1346"/>
<dbReference type="eggNOG" id="COG0166">
    <property type="taxonomic scope" value="Bacteria"/>
</dbReference>
<dbReference type="HOGENOM" id="CLU_017947_3_1_7"/>
<dbReference type="OrthoDB" id="140919at2"/>
<dbReference type="BioCyc" id="HACI382638:HAC_RS05780-MONOMER"/>
<dbReference type="UniPathway" id="UPA00109">
    <property type="reaction ID" value="UER00181"/>
</dbReference>
<dbReference type="UniPathway" id="UPA00138"/>
<dbReference type="Proteomes" id="UP000000775">
    <property type="component" value="Chromosome"/>
</dbReference>
<dbReference type="GO" id="GO:0005829">
    <property type="term" value="C:cytosol"/>
    <property type="evidence" value="ECO:0007669"/>
    <property type="project" value="TreeGrafter"/>
</dbReference>
<dbReference type="GO" id="GO:0097367">
    <property type="term" value="F:carbohydrate derivative binding"/>
    <property type="evidence" value="ECO:0007669"/>
    <property type="project" value="InterPro"/>
</dbReference>
<dbReference type="GO" id="GO:0004347">
    <property type="term" value="F:glucose-6-phosphate isomerase activity"/>
    <property type="evidence" value="ECO:0007669"/>
    <property type="project" value="UniProtKB-UniRule"/>
</dbReference>
<dbReference type="GO" id="GO:0048029">
    <property type="term" value="F:monosaccharide binding"/>
    <property type="evidence" value="ECO:0007669"/>
    <property type="project" value="TreeGrafter"/>
</dbReference>
<dbReference type="GO" id="GO:0006094">
    <property type="term" value="P:gluconeogenesis"/>
    <property type="evidence" value="ECO:0007669"/>
    <property type="project" value="UniProtKB-UniRule"/>
</dbReference>
<dbReference type="GO" id="GO:0051156">
    <property type="term" value="P:glucose 6-phosphate metabolic process"/>
    <property type="evidence" value="ECO:0007669"/>
    <property type="project" value="TreeGrafter"/>
</dbReference>
<dbReference type="GO" id="GO:0006096">
    <property type="term" value="P:glycolytic process"/>
    <property type="evidence" value="ECO:0007669"/>
    <property type="project" value="UniProtKB-UniRule"/>
</dbReference>
<dbReference type="CDD" id="cd05015">
    <property type="entry name" value="SIS_PGI_1"/>
    <property type="match status" value="1"/>
</dbReference>
<dbReference type="CDD" id="cd05016">
    <property type="entry name" value="SIS_PGI_2"/>
    <property type="match status" value="1"/>
</dbReference>
<dbReference type="FunFam" id="3.40.50.10490:FF:000018">
    <property type="entry name" value="Glucose-6-phosphate isomerase"/>
    <property type="match status" value="1"/>
</dbReference>
<dbReference type="Gene3D" id="1.10.1390.10">
    <property type="match status" value="1"/>
</dbReference>
<dbReference type="Gene3D" id="3.40.50.10490">
    <property type="entry name" value="Glucose-6-phosphate isomerase like protein, domain 1"/>
    <property type="match status" value="2"/>
</dbReference>
<dbReference type="HAMAP" id="MF_00473">
    <property type="entry name" value="G6P_isomerase"/>
    <property type="match status" value="1"/>
</dbReference>
<dbReference type="InterPro" id="IPR001672">
    <property type="entry name" value="G6P_Isomerase"/>
</dbReference>
<dbReference type="InterPro" id="IPR023096">
    <property type="entry name" value="G6P_Isomerase_C"/>
</dbReference>
<dbReference type="InterPro" id="IPR018189">
    <property type="entry name" value="Phosphoglucose_isomerase_CS"/>
</dbReference>
<dbReference type="InterPro" id="IPR046348">
    <property type="entry name" value="SIS_dom_sf"/>
</dbReference>
<dbReference type="InterPro" id="IPR035476">
    <property type="entry name" value="SIS_PGI_1"/>
</dbReference>
<dbReference type="InterPro" id="IPR035482">
    <property type="entry name" value="SIS_PGI_2"/>
</dbReference>
<dbReference type="NCBIfam" id="NF001211">
    <property type="entry name" value="PRK00179.1"/>
    <property type="match status" value="1"/>
</dbReference>
<dbReference type="PANTHER" id="PTHR11469">
    <property type="entry name" value="GLUCOSE-6-PHOSPHATE ISOMERASE"/>
    <property type="match status" value="1"/>
</dbReference>
<dbReference type="PANTHER" id="PTHR11469:SF1">
    <property type="entry name" value="GLUCOSE-6-PHOSPHATE ISOMERASE"/>
    <property type="match status" value="1"/>
</dbReference>
<dbReference type="Pfam" id="PF00342">
    <property type="entry name" value="PGI"/>
    <property type="match status" value="1"/>
</dbReference>
<dbReference type="PRINTS" id="PR00662">
    <property type="entry name" value="G6PISOMERASE"/>
</dbReference>
<dbReference type="SUPFAM" id="SSF53697">
    <property type="entry name" value="SIS domain"/>
    <property type="match status" value="1"/>
</dbReference>
<dbReference type="PROSITE" id="PS00765">
    <property type="entry name" value="P_GLUCOSE_ISOMERASE_1"/>
    <property type="match status" value="1"/>
</dbReference>
<dbReference type="PROSITE" id="PS00174">
    <property type="entry name" value="P_GLUCOSE_ISOMERASE_2"/>
    <property type="match status" value="1"/>
</dbReference>
<dbReference type="PROSITE" id="PS51463">
    <property type="entry name" value="P_GLUCOSE_ISOMERASE_3"/>
    <property type="match status" value="1"/>
</dbReference>
<proteinExistence type="inferred from homology"/>
<protein>
    <recommendedName>
        <fullName evidence="1">Glucose-6-phosphate isomerase</fullName>
        <shortName evidence="1">GPI</shortName>
        <ecNumber evidence="1">5.3.1.9</ecNumber>
    </recommendedName>
    <alternativeName>
        <fullName evidence="1">Phosphoglucose isomerase</fullName>
        <shortName evidence="1">PGI</shortName>
    </alternativeName>
    <alternativeName>
        <fullName evidence="1">Phosphohexose isomerase</fullName>
        <shortName evidence="1">PHI</shortName>
    </alternativeName>
</protein>
<reference key="1">
    <citation type="journal article" date="2006" name="PLoS Genet.">
        <title>Who ate whom? Adaptive Helicobacter genomic changes that accompanied a host jump from early humans to large felines.</title>
        <authorList>
            <person name="Eppinger M."/>
            <person name="Baar C."/>
            <person name="Linz B."/>
            <person name="Raddatz G."/>
            <person name="Lanz C."/>
            <person name="Keller H."/>
            <person name="Morelli G."/>
            <person name="Gressmann H."/>
            <person name="Achtman M."/>
            <person name="Schuster S.C."/>
        </authorList>
    </citation>
    <scope>NUCLEOTIDE SEQUENCE [LARGE SCALE GENOMIC DNA]</scope>
    <source>
        <strain>Sheeba</strain>
    </source>
</reference>
<evidence type="ECO:0000255" key="1">
    <source>
        <dbReference type="HAMAP-Rule" id="MF_00473"/>
    </source>
</evidence>
<name>G6PI_HELAH</name>
<sequence>MLTQLKTYPKLLKHYEEIKEMHMRDWFSKDKERASRYFVQFESLSLDYSKNRLNDTTLKLLFELARDCSLKEKIEAMFKGEKINTTEKRAVLHTALRSLNDTEILLDNMEVLKSVRSVLKRMRAFSDSVRSGKRLGYTNQVITDIVNIGIGGSDLGALMVCTALKRYAHPRLKMHFVSNVDGTQILDVLEKLNPASTLFIVASKTFSTQETLTNALTARKWFVERSGDEKHIAKHFVAVSTNKEAVQQFGIDEHNMFEFWDFVGGRYSLWSAIGLSIMIYLGKKNFNALLKGAYLMDEHFKNAPFESNLPVLMGLIGVWYINFFKSKSHLIAPYDQYLRHFPKFIQQLDMESNGKRISKKGETIPYDTCPVVWGDMGINAQHAFFQLLHQGTHLIPIDFIASLDKKPNAKGHHEILFSNVLAQAQAFMKGKSYEEAFGELLSKGLEKDEAKDLAHHRVFFGNRPSNILLLEKISPSNMGALVALYEHKVFVQGVIWDINSFDQWGVELGKELAVPILQELEGHKSNAFFDSSTKHLIELYKNYNQ</sequence>
<keyword id="KW-0963">Cytoplasm</keyword>
<keyword id="KW-0312">Gluconeogenesis</keyword>
<keyword id="KW-0324">Glycolysis</keyword>
<keyword id="KW-0413">Isomerase</keyword>
<gene>
    <name evidence="1" type="primary">pgi</name>
    <name type="ordered locus">Hac_1346</name>
</gene>
<feature type="chain" id="PRO_1000013975" description="Glucose-6-phosphate isomerase">
    <location>
        <begin position="1"/>
        <end position="545"/>
    </location>
</feature>
<feature type="active site" description="Proton donor" evidence="1">
    <location>
        <position position="351"/>
    </location>
</feature>
<feature type="active site" evidence="1">
    <location>
        <position position="382"/>
    </location>
</feature>
<feature type="active site" evidence="1">
    <location>
        <position position="510"/>
    </location>
</feature>